<keyword id="KW-0002">3D-structure</keyword>
<keyword id="KW-0067">ATP-binding</keyword>
<keyword id="KW-0094">Blood coagulation</keyword>
<keyword id="KW-1003">Cell membrane</keyword>
<keyword id="KW-1015">Disulfide bond</keyword>
<keyword id="KW-0297">G-protein coupled receptor</keyword>
<keyword id="KW-0325">Glycoprotein</keyword>
<keyword id="KW-0356">Hemostasis</keyword>
<keyword id="KW-0472">Membrane</keyword>
<keyword id="KW-0547">Nucleotide-binding</keyword>
<keyword id="KW-1267">Proteomics identification</keyword>
<keyword id="KW-0675">Receptor</keyword>
<keyword id="KW-1185">Reference proteome</keyword>
<keyword id="KW-0807">Transducer</keyword>
<keyword id="KW-0812">Transmembrane</keyword>
<keyword id="KW-1133">Transmembrane helix</keyword>
<reference key="1">
    <citation type="journal article" date="1996" name="Gene">
        <title>Cloning and sequencing of a human cDNA encoding endothelial P2Y1 purinoceptor.</title>
        <authorList>
            <person name="Leon C."/>
            <person name="Vial C."/>
            <person name="Cazenave J.-P."/>
            <person name="Gachet C."/>
        </authorList>
    </citation>
    <scope>NUCLEOTIDE SEQUENCE [MRNA]</scope>
    <source>
        <tissue>Placenta</tissue>
    </source>
</reference>
<reference key="2">
    <citation type="journal article" date="1996" name="Biochem. Biophys. Res. Commun.">
        <title>Cloning and chromosomal localization of the human P2Y1 purinoceptor.</title>
        <authorList>
            <person name="Ayyanathan K."/>
            <person name="Tania W."/>
            <person name="Harbansjit S."/>
            <person name="Raghbir A.S."/>
            <person name="Barnard E.A."/>
            <person name="Kunapuli S.P."/>
        </authorList>
    </citation>
    <scope>NUCLEOTIDE SEQUENCE [MRNA]</scope>
</reference>
<reference key="3">
    <citation type="journal article" date="1996" name="Biochem. Biophys. Res. Commun.">
        <title>Cloning and tissue distribution of the human P2Y1 receptor.</title>
        <authorList>
            <person name="Janssens R."/>
            <person name="Communi D."/>
            <person name="Pirotton S."/>
            <person name="Samson M."/>
            <person name="Parmentier M."/>
            <person name="Boeynaems J.-M."/>
        </authorList>
    </citation>
    <scope>NUCLEOTIDE SEQUENCE [GENOMIC DNA]</scope>
</reference>
<reference key="4">
    <citation type="submission" date="1998-06" db="EMBL/GenBank/DDBJ databases">
        <authorList>
            <person name="Leon C."/>
            <person name="Vial C."/>
            <person name="Weber J."/>
            <person name="Cazenave J.-P."/>
            <person name="Gacher C."/>
        </authorList>
    </citation>
    <scope>NUCLEOTIDE SEQUENCE [GENOMIC DNA]</scope>
    <source>
        <tissue>Blood</tissue>
    </source>
</reference>
<reference key="5">
    <citation type="submission" date="2002-07" db="EMBL/GenBank/DDBJ databases">
        <title>cDNA clones of human proteins involved in signal transduction sequenced by the Guthrie cDNA resource center (www.cdna.org).</title>
        <authorList>
            <person name="Puhl H.L. III"/>
            <person name="Ikeda S.R."/>
            <person name="Aronstam R.S."/>
        </authorList>
    </citation>
    <scope>NUCLEOTIDE SEQUENCE [LARGE SCALE MRNA]</scope>
    <source>
        <tissue>Lung</tissue>
    </source>
</reference>
<reference key="6">
    <citation type="journal article" date="2004" name="Genome Res.">
        <title>The status, quality, and expansion of the NIH full-length cDNA project: the Mammalian Gene Collection (MGC).</title>
        <authorList>
            <consortium name="The MGC Project Team"/>
        </authorList>
    </citation>
    <scope>NUCLEOTIDE SEQUENCE [LARGE SCALE MRNA]</scope>
    <source>
        <tissue>Brain</tissue>
    </source>
</reference>
<reference key="7">
    <citation type="journal article" date="1998" name="J. Biol. Chem.">
        <title>Molecular basis for ADP-induced platelet activation. II. The P2Y1 receptor mediates ADP-induced intracellular calcium mobilization and shape change in platelets.</title>
        <authorList>
            <person name="Jin J."/>
            <person name="Daniel J.L."/>
            <person name="Kunapuli S.P."/>
        </authorList>
    </citation>
    <scope>NUCLEOTIDE SEQUENCE [MRNA] OF 95-373</scope>
    <scope>FUNCTION</scope>
    <scope>ACTIVITY REGULATION</scope>
    <source>
        <tissue>Platelet</tissue>
    </source>
</reference>
<reference key="8">
    <citation type="journal article" date="1997" name="FEBS Lett.">
        <title>The P2Y1 receptor is an ADP receptor antagonized by ATP and expressed in platelets and megakaryoblastic cells.</title>
        <authorList>
            <person name="Leon C."/>
            <person name="Hechler B."/>
            <person name="Vial C."/>
            <person name="Leray C."/>
            <person name="Cazenave J.P."/>
            <person name="Gachet C."/>
        </authorList>
    </citation>
    <scope>FUNCTION</scope>
    <scope>ACTIVITY REGULATION</scope>
</reference>
<reference key="9">
    <citation type="journal article" date="2008" name="J. Proteome Res.">
        <title>Phosphoproteome of resting human platelets.</title>
        <authorList>
            <person name="Zahedi R.P."/>
            <person name="Lewandrowski U."/>
            <person name="Wiesner J."/>
            <person name="Wortelkamp S."/>
            <person name="Moebius J."/>
            <person name="Schuetz C."/>
            <person name="Walter U."/>
            <person name="Gambaryan S."/>
            <person name="Sickmann A."/>
        </authorList>
    </citation>
    <scope>IDENTIFICATION BY MASS SPECTROMETRY [LARGE SCALE ANALYSIS]</scope>
    <source>
        <tissue>Platelet</tissue>
    </source>
</reference>
<reference evidence="9 10" key="10">
    <citation type="journal article" date="2015" name="Nature">
        <title>Two disparate ligand-binding sites in the human P2Y1 receptor.</title>
        <authorList>
            <person name="Zhang D."/>
            <person name="Gao Z.G."/>
            <person name="Zhang K."/>
            <person name="Kiselev E."/>
            <person name="Crane S."/>
            <person name="Wang J."/>
            <person name="Paoletta S."/>
            <person name="Yi C."/>
            <person name="Ma L."/>
            <person name="Zhang W."/>
            <person name="Han G.W."/>
            <person name="Liu H."/>
            <person name="Cherezov V."/>
            <person name="Katritch V."/>
            <person name="Jiang H."/>
            <person name="Stevens R.C."/>
            <person name="Jacobson K.A."/>
            <person name="Zhao Q."/>
            <person name="Wu B."/>
        </authorList>
    </citation>
    <scope>X-RAY CRYSTALLOGRAPHY (2.20 ANGSTROMS) OF 2-247 AND 253-373 IN COMPLEXES WITH ATP ANALOG MRS2500 AND SYNTHETIC ANTAGONIST BPTU</scope>
    <scope>SUBCELLULAR LOCATION</scope>
    <scope>TOPOLOGY</scope>
    <scope>DISULFIDE BONDS</scope>
    <scope>MUTAGENESIS OF LEU-44; TYR-110; TYR-203; THR-205; ASN-283 AND TYR-306</scope>
</reference>
<accession>P47900</accession>
<dbReference type="EMBL" id="Z49205">
    <property type="protein sequence ID" value="CAA89066.1"/>
    <property type="molecule type" value="mRNA"/>
</dbReference>
<dbReference type="EMBL" id="U42030">
    <property type="protein sequence ID" value="AAA97873.1"/>
    <property type="molecule type" value="mRNA"/>
</dbReference>
<dbReference type="EMBL" id="U42029">
    <property type="protein sequence ID" value="AAA97872.1"/>
    <property type="molecule type" value="mRNA"/>
</dbReference>
<dbReference type="EMBL" id="S81950">
    <property type="protein sequence ID" value="AAB47091.1"/>
    <property type="molecule type" value="Genomic_DNA"/>
</dbReference>
<dbReference type="EMBL" id="AJ006945">
    <property type="protein sequence ID" value="CAA07339.1"/>
    <property type="molecule type" value="Genomic_DNA"/>
</dbReference>
<dbReference type="EMBL" id="AY136752">
    <property type="protein sequence ID" value="AAN01278.1"/>
    <property type="molecule type" value="mRNA"/>
</dbReference>
<dbReference type="EMBL" id="BC074784">
    <property type="protein sequence ID" value="AAH74784.1"/>
    <property type="molecule type" value="mRNA"/>
</dbReference>
<dbReference type="EMBL" id="BC074785">
    <property type="protein sequence ID" value="AAH74785.1"/>
    <property type="molecule type" value="mRNA"/>
</dbReference>
<dbReference type="EMBL" id="AF018284">
    <property type="protein sequence ID" value="AAB94556.1"/>
    <property type="molecule type" value="mRNA"/>
</dbReference>
<dbReference type="CCDS" id="CCDS3169.1"/>
<dbReference type="PIR" id="JC4737">
    <property type="entry name" value="JC4737"/>
</dbReference>
<dbReference type="RefSeq" id="NP_002554.1">
    <property type="nucleotide sequence ID" value="NM_002563.5"/>
</dbReference>
<dbReference type="PDB" id="4XNV">
    <property type="method" value="X-ray"/>
    <property type="resolution" value="2.20 A"/>
    <property type="chains" value="A=2-247, A=253-373"/>
</dbReference>
<dbReference type="PDB" id="4XNW">
    <property type="method" value="X-ray"/>
    <property type="resolution" value="2.70 A"/>
    <property type="chains" value="A/C=2-247, A/C=253-373"/>
</dbReference>
<dbReference type="PDB" id="7XXH">
    <property type="method" value="EM"/>
    <property type="resolution" value="2.90 A"/>
    <property type="chains" value="R=2-373"/>
</dbReference>
<dbReference type="PDB" id="8WJX">
    <property type="method" value="EM"/>
    <property type="resolution" value="3.20 A"/>
    <property type="chains" value="R=2-370"/>
</dbReference>
<dbReference type="PDBsum" id="4XNV"/>
<dbReference type="PDBsum" id="4XNW"/>
<dbReference type="PDBsum" id="7XXH"/>
<dbReference type="PDBsum" id="8WJX"/>
<dbReference type="EMDB" id="EMD-33503"/>
<dbReference type="EMDB" id="EMD-37591"/>
<dbReference type="SMR" id="P47900"/>
<dbReference type="BioGRID" id="111067">
    <property type="interactions" value="51"/>
</dbReference>
<dbReference type="CORUM" id="P47900"/>
<dbReference type="FunCoup" id="P47900">
    <property type="interactions" value="814"/>
</dbReference>
<dbReference type="IntAct" id="P47900">
    <property type="interactions" value="42"/>
</dbReference>
<dbReference type="MINT" id="P47900"/>
<dbReference type="STRING" id="9606.ENSP00000304767"/>
<dbReference type="BindingDB" id="P47900"/>
<dbReference type="ChEMBL" id="CHEMBL4315"/>
<dbReference type="DrugBank" id="DB01069">
    <property type="generic name" value="Promethazine"/>
</dbReference>
<dbReference type="DrugCentral" id="P47900"/>
<dbReference type="GuidetoPHARMACOLOGY" id="323"/>
<dbReference type="TCDB" id="9.A.14.13.22">
    <property type="family name" value="the g-protein-coupled receptor (gpcr) family"/>
</dbReference>
<dbReference type="GlyCosmos" id="P47900">
    <property type="glycosylation" value="4 sites, No reported glycans"/>
</dbReference>
<dbReference type="GlyGen" id="P47900">
    <property type="glycosylation" value="4 sites"/>
</dbReference>
<dbReference type="iPTMnet" id="P47900"/>
<dbReference type="PhosphoSitePlus" id="P47900"/>
<dbReference type="BioMuta" id="P2RY1"/>
<dbReference type="DMDM" id="1352692"/>
<dbReference type="jPOST" id="P47900"/>
<dbReference type="MassIVE" id="P47900"/>
<dbReference type="PaxDb" id="9606-ENSP00000304767"/>
<dbReference type="PeptideAtlas" id="P47900"/>
<dbReference type="ProteomicsDB" id="55818"/>
<dbReference type="TopDownProteomics" id="P47900"/>
<dbReference type="Antibodypedia" id="2952">
    <property type="antibodies" value="402 antibodies from 36 providers"/>
</dbReference>
<dbReference type="DNASU" id="5028"/>
<dbReference type="Ensembl" id="ENST00000305097.6">
    <property type="protein sequence ID" value="ENSP00000304767.3"/>
    <property type="gene ID" value="ENSG00000169860.7"/>
</dbReference>
<dbReference type="GeneID" id="5028"/>
<dbReference type="KEGG" id="hsa:5028"/>
<dbReference type="MANE-Select" id="ENST00000305097.6">
    <property type="protein sequence ID" value="ENSP00000304767.3"/>
    <property type="RefSeq nucleotide sequence ID" value="NM_002563.5"/>
    <property type="RefSeq protein sequence ID" value="NP_002554.1"/>
</dbReference>
<dbReference type="UCSC" id="uc003ezq.4">
    <property type="organism name" value="human"/>
</dbReference>
<dbReference type="AGR" id="HGNC:8539"/>
<dbReference type="CTD" id="5028"/>
<dbReference type="DisGeNET" id="5028"/>
<dbReference type="GeneCards" id="P2RY1"/>
<dbReference type="HGNC" id="HGNC:8539">
    <property type="gene designation" value="P2RY1"/>
</dbReference>
<dbReference type="HPA" id="ENSG00000169860">
    <property type="expression patterns" value="Tissue enhanced (placenta)"/>
</dbReference>
<dbReference type="MIM" id="601167">
    <property type="type" value="gene"/>
</dbReference>
<dbReference type="neXtProt" id="NX_P47900"/>
<dbReference type="OpenTargets" id="ENSG00000169860"/>
<dbReference type="PharmGKB" id="PA32868"/>
<dbReference type="VEuPathDB" id="HostDB:ENSG00000169860"/>
<dbReference type="eggNOG" id="ENOG502QWPV">
    <property type="taxonomic scope" value="Eukaryota"/>
</dbReference>
<dbReference type="GeneTree" id="ENSGT01030000234621"/>
<dbReference type="HOGENOM" id="CLU_009579_8_2_1"/>
<dbReference type="InParanoid" id="P47900"/>
<dbReference type="OMA" id="GFCVPFI"/>
<dbReference type="OrthoDB" id="8190652at2759"/>
<dbReference type="PAN-GO" id="P47900">
    <property type="GO annotations" value="6 GO annotations based on evolutionary models"/>
</dbReference>
<dbReference type="PhylomeDB" id="P47900"/>
<dbReference type="TreeFam" id="TF350009"/>
<dbReference type="PathwayCommons" id="P47900"/>
<dbReference type="Reactome" id="R-HSA-416476">
    <property type="pathway name" value="G alpha (q) signalling events"/>
</dbReference>
<dbReference type="Reactome" id="R-HSA-417957">
    <property type="pathway name" value="P2Y receptors"/>
</dbReference>
<dbReference type="Reactome" id="R-HSA-418592">
    <property type="pathway name" value="ADP signalling through P2Y purinoceptor 1"/>
</dbReference>
<dbReference type="SignaLink" id="P47900"/>
<dbReference type="SIGNOR" id="P47900"/>
<dbReference type="BioGRID-ORCS" id="5028">
    <property type="hits" value="9 hits in 1145 CRISPR screens"/>
</dbReference>
<dbReference type="ChiTaRS" id="P2RY1">
    <property type="organism name" value="human"/>
</dbReference>
<dbReference type="EvolutionaryTrace" id="P47900"/>
<dbReference type="GeneWiki" id="P2RY1"/>
<dbReference type="GenomeRNAi" id="5028"/>
<dbReference type="Pharos" id="P47900">
    <property type="development level" value="Tchem"/>
</dbReference>
<dbReference type="PRO" id="PR:P47900"/>
<dbReference type="Proteomes" id="UP000005640">
    <property type="component" value="Chromosome 3"/>
</dbReference>
<dbReference type="RNAct" id="P47900">
    <property type="molecule type" value="protein"/>
</dbReference>
<dbReference type="Bgee" id="ENSG00000169860">
    <property type="expression patterns" value="Expressed in gingival epithelium and 160 other cell types or tissues"/>
</dbReference>
<dbReference type="GO" id="GO:0016324">
    <property type="term" value="C:apical plasma membrane"/>
    <property type="evidence" value="ECO:0007669"/>
    <property type="project" value="Ensembl"/>
</dbReference>
<dbReference type="GO" id="GO:0016323">
    <property type="term" value="C:basolateral plasma membrane"/>
    <property type="evidence" value="ECO:0007669"/>
    <property type="project" value="Ensembl"/>
</dbReference>
<dbReference type="GO" id="GO:0044297">
    <property type="term" value="C:cell body"/>
    <property type="evidence" value="ECO:0000250"/>
    <property type="project" value="BHF-UCL"/>
</dbReference>
<dbReference type="GO" id="GO:0009986">
    <property type="term" value="C:cell surface"/>
    <property type="evidence" value="ECO:0007005"/>
    <property type="project" value="UniProtKB"/>
</dbReference>
<dbReference type="GO" id="GO:0005929">
    <property type="term" value="C:cilium"/>
    <property type="evidence" value="ECO:0000314"/>
    <property type="project" value="MGI"/>
</dbReference>
<dbReference type="GO" id="GO:0030425">
    <property type="term" value="C:dendrite"/>
    <property type="evidence" value="ECO:0000250"/>
    <property type="project" value="BHF-UCL"/>
</dbReference>
<dbReference type="GO" id="GO:0098978">
    <property type="term" value="C:glutamatergic synapse"/>
    <property type="evidence" value="ECO:0007669"/>
    <property type="project" value="Ensembl"/>
</dbReference>
<dbReference type="GO" id="GO:0005886">
    <property type="term" value="C:plasma membrane"/>
    <property type="evidence" value="ECO:0000314"/>
    <property type="project" value="UniProtKB"/>
</dbReference>
<dbReference type="GO" id="GO:0014069">
    <property type="term" value="C:postsynaptic density"/>
    <property type="evidence" value="ECO:0000250"/>
    <property type="project" value="BHF-UCL"/>
</dbReference>
<dbReference type="GO" id="GO:0045211">
    <property type="term" value="C:postsynaptic membrane"/>
    <property type="evidence" value="ECO:0000250"/>
    <property type="project" value="BHF-UCL"/>
</dbReference>
<dbReference type="GO" id="GO:0048787">
    <property type="term" value="C:presynaptic active zone membrane"/>
    <property type="evidence" value="ECO:0007669"/>
    <property type="project" value="Ensembl"/>
</dbReference>
<dbReference type="GO" id="GO:0031686">
    <property type="term" value="F:A1 adenosine receptor binding"/>
    <property type="evidence" value="ECO:0000250"/>
    <property type="project" value="BHF-UCL"/>
</dbReference>
<dbReference type="GO" id="GO:0043531">
    <property type="term" value="F:ADP binding"/>
    <property type="evidence" value="ECO:0007669"/>
    <property type="project" value="Ensembl"/>
</dbReference>
<dbReference type="GO" id="GO:0005524">
    <property type="term" value="F:ATP binding"/>
    <property type="evidence" value="ECO:0000315"/>
    <property type="project" value="UniProtKB"/>
</dbReference>
<dbReference type="GO" id="GO:0001621">
    <property type="term" value="F:G protein-coupled ADP receptor activity"/>
    <property type="evidence" value="ECO:0000315"/>
    <property type="project" value="UniProtKB"/>
</dbReference>
<dbReference type="GO" id="GO:0045031">
    <property type="term" value="F:G protein-coupled ATP receptor activity"/>
    <property type="evidence" value="ECO:0000250"/>
    <property type="project" value="BHF-UCL"/>
</dbReference>
<dbReference type="GO" id="GO:0045028">
    <property type="term" value="F:G protein-coupled purinergic nucleotide receptor activity"/>
    <property type="evidence" value="ECO:0000250"/>
    <property type="project" value="BHF-UCL"/>
</dbReference>
<dbReference type="GO" id="GO:0046982">
    <property type="term" value="F:protein heterodimerization activity"/>
    <property type="evidence" value="ECO:0007669"/>
    <property type="project" value="Ensembl"/>
</dbReference>
<dbReference type="GO" id="GO:0097110">
    <property type="term" value="F:scaffold protein binding"/>
    <property type="evidence" value="ECO:0000250"/>
    <property type="project" value="BHF-UCL"/>
</dbReference>
<dbReference type="GO" id="GO:0038023">
    <property type="term" value="F:signaling receptor activity"/>
    <property type="evidence" value="ECO:0000304"/>
    <property type="project" value="ProtInc"/>
</dbReference>
<dbReference type="GO" id="GO:0030545">
    <property type="term" value="F:signaling receptor regulator activity"/>
    <property type="evidence" value="ECO:0000250"/>
    <property type="project" value="BHF-UCL"/>
</dbReference>
<dbReference type="GO" id="GO:0007193">
    <property type="term" value="P:adenylate cyclase-inhibiting G protein-coupled receptor signaling pathway"/>
    <property type="evidence" value="ECO:0000250"/>
    <property type="project" value="BHF-UCL"/>
</dbReference>
<dbReference type="GO" id="GO:0097746">
    <property type="term" value="P:blood vessel diameter maintenance"/>
    <property type="evidence" value="ECO:0007669"/>
    <property type="project" value="Ensembl"/>
</dbReference>
<dbReference type="GO" id="GO:0007166">
    <property type="term" value="P:cell surface receptor signaling pathway"/>
    <property type="evidence" value="ECO:0000304"/>
    <property type="project" value="ProtInc"/>
</dbReference>
<dbReference type="GO" id="GO:0071318">
    <property type="term" value="P:cellular response to ATP"/>
    <property type="evidence" value="ECO:0000304"/>
    <property type="project" value="ARUK-UCL"/>
</dbReference>
<dbReference type="GO" id="GO:0071415">
    <property type="term" value="P:cellular response to purine-containing compound"/>
    <property type="evidence" value="ECO:0000315"/>
    <property type="project" value="UniProtKB"/>
</dbReference>
<dbReference type="GO" id="GO:0042755">
    <property type="term" value="P:eating behavior"/>
    <property type="evidence" value="ECO:0007669"/>
    <property type="project" value="Ensembl"/>
</dbReference>
<dbReference type="GO" id="GO:0051649">
    <property type="term" value="P:establishment of localization in cell"/>
    <property type="evidence" value="ECO:0007669"/>
    <property type="project" value="Ensembl"/>
</dbReference>
<dbReference type="GO" id="GO:0001973">
    <property type="term" value="P:G protein-coupled adenosine receptor signaling pathway"/>
    <property type="evidence" value="ECO:0007669"/>
    <property type="project" value="Ensembl"/>
</dbReference>
<dbReference type="GO" id="GO:0035589">
    <property type="term" value="P:G protein-coupled purinergic nucleotide receptor signaling pathway"/>
    <property type="evidence" value="ECO:0000250"/>
    <property type="project" value="BHF-UCL"/>
</dbReference>
<dbReference type="GO" id="GO:0007186">
    <property type="term" value="P:G protein-coupled receptor signaling pathway"/>
    <property type="evidence" value="ECO:0000250"/>
    <property type="project" value="BHF-UCL"/>
</dbReference>
<dbReference type="GO" id="GO:0008347">
    <property type="term" value="P:glial cell migration"/>
    <property type="evidence" value="ECO:0007669"/>
    <property type="project" value="Ensembl"/>
</dbReference>
<dbReference type="GO" id="GO:0006811">
    <property type="term" value="P:monoatomic ion transport"/>
    <property type="evidence" value="ECO:0007669"/>
    <property type="project" value="Ensembl"/>
</dbReference>
<dbReference type="GO" id="GO:0010700">
    <property type="term" value="P:negative regulation of norepinephrine secretion"/>
    <property type="evidence" value="ECO:0007669"/>
    <property type="project" value="Ensembl"/>
</dbReference>
<dbReference type="GO" id="GO:0007200">
    <property type="term" value="P:phospholipase C-activating G protein-coupled receptor signaling pathway"/>
    <property type="evidence" value="ECO:0000315"/>
    <property type="project" value="UniProtKB"/>
</dbReference>
<dbReference type="GO" id="GO:0030168">
    <property type="term" value="P:platelet activation"/>
    <property type="evidence" value="ECO:0007669"/>
    <property type="project" value="InterPro"/>
</dbReference>
<dbReference type="GO" id="GO:0007204">
    <property type="term" value="P:positive regulation of cytosolic calcium ion concentration"/>
    <property type="evidence" value="ECO:0000250"/>
    <property type="project" value="BHF-UCL"/>
</dbReference>
<dbReference type="GO" id="GO:0070374">
    <property type="term" value="P:positive regulation of ERK1 and ERK2 cascade"/>
    <property type="evidence" value="ECO:0000250"/>
    <property type="project" value="BHF-UCL"/>
</dbReference>
<dbReference type="GO" id="GO:0046887">
    <property type="term" value="P:positive regulation of hormone secretion"/>
    <property type="evidence" value="ECO:0007669"/>
    <property type="project" value="Ensembl"/>
</dbReference>
<dbReference type="GO" id="GO:0032962">
    <property type="term" value="P:positive regulation of inositol trisphosphate biosynthetic process"/>
    <property type="evidence" value="ECO:0007669"/>
    <property type="project" value="Ensembl"/>
</dbReference>
<dbReference type="GO" id="GO:0043270">
    <property type="term" value="P:positive regulation of monoatomic ion transport"/>
    <property type="evidence" value="ECO:0007669"/>
    <property type="project" value="Ensembl"/>
</dbReference>
<dbReference type="GO" id="GO:0060406">
    <property type="term" value="P:positive regulation of penile erection"/>
    <property type="evidence" value="ECO:0007669"/>
    <property type="project" value="Ensembl"/>
</dbReference>
<dbReference type="GO" id="GO:0045944">
    <property type="term" value="P:positive regulation of transcription by RNA polymerase II"/>
    <property type="evidence" value="ECO:0007669"/>
    <property type="project" value="Ensembl"/>
</dbReference>
<dbReference type="GO" id="GO:0072659">
    <property type="term" value="P:protein localization to plasma membrane"/>
    <property type="evidence" value="ECO:0000250"/>
    <property type="project" value="BHF-UCL"/>
</dbReference>
<dbReference type="GO" id="GO:0008360">
    <property type="term" value="P:regulation of cell shape"/>
    <property type="evidence" value="ECO:0000315"/>
    <property type="project" value="UniProtKB"/>
</dbReference>
<dbReference type="GO" id="GO:0099509">
    <property type="term" value="P:regulation of presynaptic cytosolic calcium ion concentration"/>
    <property type="evidence" value="ECO:0007669"/>
    <property type="project" value="Ensembl"/>
</dbReference>
<dbReference type="GO" id="GO:2000300">
    <property type="term" value="P:regulation of synaptic vesicle exocytosis"/>
    <property type="evidence" value="ECO:0007669"/>
    <property type="project" value="Ensembl"/>
</dbReference>
<dbReference type="GO" id="GO:0090075">
    <property type="term" value="P:relaxation of muscle"/>
    <property type="evidence" value="ECO:0007669"/>
    <property type="project" value="InterPro"/>
</dbReference>
<dbReference type="GO" id="GO:0070848">
    <property type="term" value="P:response to growth factor"/>
    <property type="evidence" value="ECO:0007669"/>
    <property type="project" value="Ensembl"/>
</dbReference>
<dbReference type="GO" id="GO:0009612">
    <property type="term" value="P:response to mechanical stimulus"/>
    <property type="evidence" value="ECO:0007669"/>
    <property type="project" value="Ensembl"/>
</dbReference>
<dbReference type="GO" id="GO:0023019">
    <property type="term" value="P:signal transduction involved in regulation of gene expression"/>
    <property type="evidence" value="ECO:0000250"/>
    <property type="project" value="BHF-UCL"/>
</dbReference>
<dbReference type="CDD" id="cd15377">
    <property type="entry name" value="7tmA_P2Y1"/>
    <property type="match status" value="1"/>
</dbReference>
<dbReference type="FunFam" id="1.20.1070.10:FF:000017">
    <property type="entry name" value="lysophosphatidic acid receptor 4"/>
    <property type="match status" value="1"/>
</dbReference>
<dbReference type="Gene3D" id="1.20.1070.10">
    <property type="entry name" value="Rhodopsin 7-helix transmembrane proteins"/>
    <property type="match status" value="1"/>
</dbReference>
<dbReference type="InterPro" id="IPR000276">
    <property type="entry name" value="GPCR_Rhodpsn"/>
</dbReference>
<dbReference type="InterPro" id="IPR017452">
    <property type="entry name" value="GPCR_Rhodpsn_7TM"/>
</dbReference>
<dbReference type="InterPro" id="IPR000142">
    <property type="entry name" value="P2Y1_rcpt"/>
</dbReference>
<dbReference type="PANTHER" id="PTHR24231:SF2">
    <property type="entry name" value="P2Y PURINOCEPTOR 1"/>
    <property type="match status" value="1"/>
</dbReference>
<dbReference type="PANTHER" id="PTHR24231">
    <property type="entry name" value="PURINOCEPTOR-RELATED G-PROTEIN COUPLED RECEPTOR"/>
    <property type="match status" value="1"/>
</dbReference>
<dbReference type="Pfam" id="PF00001">
    <property type="entry name" value="7tm_1"/>
    <property type="match status" value="1"/>
</dbReference>
<dbReference type="PRINTS" id="PR00237">
    <property type="entry name" value="GPCRRHODOPSN"/>
</dbReference>
<dbReference type="PRINTS" id="PR00595">
    <property type="entry name" value="P2Y1PRNOCPTR"/>
</dbReference>
<dbReference type="PRINTS" id="PR01157">
    <property type="entry name" value="P2YPURNOCPTR"/>
</dbReference>
<dbReference type="SUPFAM" id="SSF81321">
    <property type="entry name" value="Family A G protein-coupled receptor-like"/>
    <property type="match status" value="1"/>
</dbReference>
<dbReference type="PROSITE" id="PS00237">
    <property type="entry name" value="G_PROTEIN_RECEP_F1_1"/>
    <property type="match status" value="1"/>
</dbReference>
<dbReference type="PROSITE" id="PS50262">
    <property type="entry name" value="G_PROTEIN_RECEP_F1_2"/>
    <property type="match status" value="1"/>
</dbReference>
<proteinExistence type="evidence at protein level"/>
<name>P2RY1_HUMAN</name>
<organism>
    <name type="scientific">Homo sapiens</name>
    <name type="common">Human</name>
    <dbReference type="NCBI Taxonomy" id="9606"/>
    <lineage>
        <taxon>Eukaryota</taxon>
        <taxon>Metazoa</taxon>
        <taxon>Chordata</taxon>
        <taxon>Craniata</taxon>
        <taxon>Vertebrata</taxon>
        <taxon>Euteleostomi</taxon>
        <taxon>Mammalia</taxon>
        <taxon>Eutheria</taxon>
        <taxon>Euarchontoglires</taxon>
        <taxon>Primates</taxon>
        <taxon>Haplorrhini</taxon>
        <taxon>Catarrhini</taxon>
        <taxon>Hominidae</taxon>
        <taxon>Homo</taxon>
    </lineage>
</organism>
<gene>
    <name type="primary">P2RY1</name>
</gene>
<comment type="function">
    <text evidence="3 4 5">Receptor for extracellular adenine nucleotides such as ADP (PubMed:25822790, PubMed:9038354, PubMed:9442040). In platelets, binding to ADP leads to mobilization of intracellular calcium ions via activation of phospholipase C, a change in platelet shape, and ultimately platelet aggregation (PubMed:9442040).</text>
</comment>
<comment type="activity regulation">
    <text evidence="4 5">ATP functions as antagonist and inhibits ADP-induced mobilization of Ca(2+) (PubMed:9038354). The P2Y1 receptor-specific antagonists A3P5PS, A3P5P and A2P5P inhibit downstream signaling mediated by mobilization of Ca(2+) from intracellular stores, and platelet shape changes in response to extracellular ADP (PubMed:9442040).</text>
</comment>
<comment type="interaction">
    <interactant intactId="EBI-8677223">
        <id>P47900</id>
    </interactant>
    <interactant intactId="EBI-349787">
        <id>O14745</id>
        <label>NHERF1</label>
    </interactant>
    <organismsDiffer>false</organismsDiffer>
    <experiments>2</experiments>
</comment>
<comment type="subcellular location">
    <subcellularLocation>
        <location evidence="3">Cell membrane</location>
        <topology evidence="3">Multi-pass membrane protein</topology>
    </subcellularLocation>
</comment>
<comment type="similarity">
    <text evidence="2">Belongs to the G-protein coupled receptor 1 family.</text>
</comment>
<evidence type="ECO:0000255" key="1"/>
<evidence type="ECO:0000255" key="2">
    <source>
        <dbReference type="PROSITE-ProRule" id="PRU00521"/>
    </source>
</evidence>
<evidence type="ECO:0000269" key="3">
    <source>
    </source>
</evidence>
<evidence type="ECO:0000269" key="4">
    <source>
    </source>
</evidence>
<evidence type="ECO:0000269" key="5">
    <source>
    </source>
</evidence>
<evidence type="ECO:0000303" key="6">
    <source>
    </source>
</evidence>
<evidence type="ECO:0000305" key="7"/>
<evidence type="ECO:0000305" key="8">
    <source>
    </source>
</evidence>
<evidence type="ECO:0007744" key="9">
    <source>
        <dbReference type="PDB" id="4XNV"/>
    </source>
</evidence>
<evidence type="ECO:0007744" key="10">
    <source>
        <dbReference type="PDB" id="4XNW"/>
    </source>
</evidence>
<evidence type="ECO:0007829" key="11">
    <source>
        <dbReference type="PDB" id="4XNV"/>
    </source>
</evidence>
<evidence type="ECO:0007829" key="12">
    <source>
        <dbReference type="PDB" id="4XNW"/>
    </source>
</evidence>
<evidence type="ECO:0007829" key="13">
    <source>
        <dbReference type="PDB" id="7XXH"/>
    </source>
</evidence>
<evidence type="ECO:0007829" key="14">
    <source>
        <dbReference type="PDB" id="8WJX"/>
    </source>
</evidence>
<protein>
    <recommendedName>
        <fullName>P2Y purinoceptor 1</fullName>
        <shortName>P2Y1</shortName>
    </recommendedName>
    <alternativeName>
        <fullName evidence="6">ADP receptor</fullName>
    </alternativeName>
    <alternativeName>
        <fullName>Purinergic receptor</fullName>
    </alternativeName>
</protein>
<sequence>MTEVLWPAVPNGTDAAFLAGPGSSWGNSTVASTAAVSSSFKCALTKTGFQFYYLPAVYILVFIIGFLGNSVAIWMFVFHMKPWSGISVYMFNLALADFLYVLTLPALIFYYFNKTDWIFGDAMCKLQRFIFHVNLYGSILFLTCISAHRYSGVVYPLKSLGRLKKKNAICISVLVWLIVVVAISPILFYSGTGVRKNKTITCYDTTSDEYLRSYFIYSMCTTVAMFCVPLVLILGCYGLIVRALIYKDLDNSPLRRKSIYLVIIVLTVFAVSYIPFHVMKTMNLRARLDFQTPAMCAFNDRVYATYQVTRGLASLNSCVDPILYFLAGDTFRRRLSRATRKASRRSEANLQSKSEDMTLNILPEFKQNGDTSL</sequence>
<feature type="chain" id="PRO_0000070006" description="P2Y purinoceptor 1">
    <location>
        <begin position="1"/>
        <end position="373"/>
    </location>
</feature>
<feature type="topological domain" description="Extracellular" evidence="3">
    <location>
        <begin position="1"/>
        <end position="51"/>
    </location>
</feature>
<feature type="transmembrane region" description="Helical; Name=1" evidence="3">
    <location>
        <begin position="52"/>
        <end position="74"/>
    </location>
</feature>
<feature type="topological domain" description="Cytoplasmic" evidence="3">
    <location>
        <begin position="75"/>
        <end position="87"/>
    </location>
</feature>
<feature type="transmembrane region" description="Helical; Name=2" evidence="3">
    <location>
        <begin position="88"/>
        <end position="109"/>
    </location>
</feature>
<feature type="topological domain" description="Extracellular" evidence="3">
    <location>
        <begin position="110"/>
        <end position="125"/>
    </location>
</feature>
<feature type="transmembrane region" description="Helical; Name=3" evidence="3">
    <location>
        <begin position="126"/>
        <end position="147"/>
    </location>
</feature>
<feature type="topological domain" description="Cytoplasmic" evidence="3">
    <location>
        <begin position="148"/>
        <end position="166"/>
    </location>
</feature>
<feature type="transmembrane region" description="Helical; Name=4" evidence="3">
    <location>
        <begin position="167"/>
        <end position="188"/>
    </location>
</feature>
<feature type="topological domain" description="Extracellular" evidence="3">
    <location>
        <begin position="189"/>
        <end position="214"/>
    </location>
</feature>
<feature type="transmembrane region" description="Helical; Name=5" evidence="3">
    <location>
        <begin position="215"/>
        <end position="237"/>
    </location>
</feature>
<feature type="topological domain" description="Cytoplasmic" evidence="3">
    <location>
        <begin position="238"/>
        <end position="260"/>
    </location>
</feature>
<feature type="transmembrane region" description="Helical; Name=6" evidence="3">
    <location>
        <begin position="261"/>
        <end position="284"/>
    </location>
</feature>
<feature type="topological domain" description="Extracellular" evidence="3">
    <location>
        <begin position="285"/>
        <end position="303"/>
    </location>
</feature>
<feature type="transmembrane region" description="Helical; Name=7" evidence="3">
    <location>
        <begin position="304"/>
        <end position="325"/>
    </location>
</feature>
<feature type="topological domain" description="Cytoplasmic" evidence="3">
    <location>
        <begin position="326"/>
        <end position="373"/>
    </location>
</feature>
<feature type="binding site" evidence="8 10">
    <location>
        <position position="46"/>
    </location>
    <ligand>
        <name>ADP</name>
        <dbReference type="ChEBI" id="CHEBI:456216"/>
    </ligand>
</feature>
<feature type="binding site" evidence="8 10">
    <location>
        <begin position="203"/>
        <end position="205"/>
    </location>
    <ligand>
        <name>ADP</name>
        <dbReference type="ChEBI" id="CHEBI:456216"/>
    </ligand>
</feature>
<feature type="binding site" evidence="8 10">
    <location>
        <begin position="283"/>
        <end position="287"/>
    </location>
    <ligand>
        <name>ADP</name>
        <dbReference type="ChEBI" id="CHEBI:456216"/>
    </ligand>
</feature>
<feature type="binding site" evidence="8 10">
    <location>
        <begin position="303"/>
        <end position="306"/>
    </location>
    <ligand>
        <name>ADP</name>
        <dbReference type="ChEBI" id="CHEBI:456216"/>
    </ligand>
</feature>
<feature type="binding site" evidence="8 10">
    <location>
        <position position="310"/>
    </location>
    <ligand>
        <name>ADP</name>
        <dbReference type="ChEBI" id="CHEBI:456216"/>
    </ligand>
</feature>
<feature type="glycosylation site" description="N-linked (GlcNAc...) asparagine" evidence="1">
    <location>
        <position position="11"/>
    </location>
</feature>
<feature type="glycosylation site" description="N-linked (GlcNAc...) asparagine" evidence="1">
    <location>
        <position position="27"/>
    </location>
</feature>
<feature type="glycosylation site" description="N-linked (GlcNAc...) asparagine" evidence="1">
    <location>
        <position position="113"/>
    </location>
</feature>
<feature type="glycosylation site" description="N-linked (GlcNAc...) asparagine" evidence="1">
    <location>
        <position position="197"/>
    </location>
</feature>
<feature type="disulfide bond" evidence="3 9 10">
    <location>
        <begin position="42"/>
        <end position="296"/>
    </location>
</feature>
<feature type="disulfide bond" evidence="2 3 9 10">
    <location>
        <begin position="124"/>
        <end position="202"/>
    </location>
</feature>
<feature type="mutagenesis site" description="Loss of ADP analog binding." evidence="3">
    <original>L</original>
    <variation>A</variation>
    <location>
        <position position="44"/>
    </location>
</feature>
<feature type="mutagenesis site" description="Loss of ADP analog binding." evidence="3">
    <original>Y</original>
    <variation>F</variation>
    <location>
        <position position="110"/>
    </location>
</feature>
<feature type="mutagenesis site" description="Loss of ADP analog binding." evidence="3">
    <original>Y</original>
    <variation>A</variation>
    <location>
        <position position="203"/>
    </location>
</feature>
<feature type="mutagenesis site" description="Loss of ADP analog binding." evidence="3">
    <original>T</original>
    <variation>A</variation>
    <location>
        <position position="205"/>
    </location>
</feature>
<feature type="mutagenesis site" description="Loss of ADP analog binding." evidence="3">
    <original>N</original>
    <variation>A</variation>
    <location>
        <position position="283"/>
    </location>
</feature>
<feature type="mutagenesis site" description="Strongly decreased affinity for ADP analog." evidence="3">
    <original>Y</original>
    <variation>F</variation>
    <location>
        <position position="306"/>
    </location>
</feature>
<feature type="sequence conflict" description="In Ref. 1; CAA89066." evidence="7" ref="1">
    <location>
        <position position="138"/>
    </location>
</feature>
<feature type="helix" evidence="11">
    <location>
        <begin position="50"/>
        <end position="78"/>
    </location>
</feature>
<feature type="helix" evidence="11">
    <location>
        <begin position="85"/>
        <end position="112"/>
    </location>
</feature>
<feature type="turn" evidence="11">
    <location>
        <begin position="113"/>
        <end position="115"/>
    </location>
</feature>
<feature type="helix" evidence="11">
    <location>
        <begin position="121"/>
        <end position="154"/>
    </location>
</feature>
<feature type="turn" evidence="12">
    <location>
        <begin position="156"/>
        <end position="158"/>
    </location>
</feature>
<feature type="helix" evidence="11">
    <location>
        <begin position="161"/>
        <end position="183"/>
    </location>
</feature>
<feature type="helix" evidence="11">
    <location>
        <begin position="186"/>
        <end position="189"/>
    </location>
</feature>
<feature type="strand" evidence="11">
    <location>
        <begin position="191"/>
        <end position="194"/>
    </location>
</feature>
<feature type="strand" evidence="11">
    <location>
        <begin position="200"/>
        <end position="205"/>
    </location>
</feature>
<feature type="turn" evidence="11">
    <location>
        <begin position="208"/>
        <end position="210"/>
    </location>
</feature>
<feature type="helix" evidence="11">
    <location>
        <begin position="211"/>
        <end position="225"/>
    </location>
</feature>
<feature type="helix" evidence="11">
    <location>
        <begin position="227"/>
        <end position="245"/>
    </location>
</feature>
<feature type="turn" evidence="14">
    <location>
        <begin position="248"/>
        <end position="251"/>
    </location>
</feature>
<feature type="helix" evidence="11">
    <location>
        <begin position="253"/>
        <end position="271"/>
    </location>
</feature>
<feature type="helix" evidence="11">
    <location>
        <begin position="273"/>
        <end position="289"/>
    </location>
</feature>
<feature type="helix" evidence="11">
    <location>
        <begin position="293"/>
        <end position="295"/>
    </location>
</feature>
<feature type="helix" evidence="11">
    <location>
        <begin position="296"/>
        <end position="319"/>
    </location>
</feature>
<feature type="helix" evidence="11">
    <location>
        <begin position="321"/>
        <end position="326"/>
    </location>
</feature>
<feature type="strand" evidence="13">
    <location>
        <begin position="329"/>
        <end position="331"/>
    </location>
</feature>
<feature type="helix" evidence="13">
    <location>
        <begin position="332"/>
        <end position="339"/>
    </location>
</feature>